<keyword id="KW-1185">Reference proteome</keyword>
<organismHost>
    <name type="scientific">Acanthamoeba polyphaga</name>
    <name type="common">Amoeba</name>
    <dbReference type="NCBI Taxonomy" id="5757"/>
</organismHost>
<organism>
    <name type="scientific">Acanthamoeba polyphaga mimivirus</name>
    <name type="common">APMV</name>
    <dbReference type="NCBI Taxonomy" id="212035"/>
    <lineage>
        <taxon>Viruses</taxon>
        <taxon>Varidnaviria</taxon>
        <taxon>Bamfordvirae</taxon>
        <taxon>Nucleocytoviricota</taxon>
        <taxon>Megaviricetes</taxon>
        <taxon>Imitervirales</taxon>
        <taxon>Mimiviridae</taxon>
        <taxon>Megamimivirinae</taxon>
        <taxon>Mimivirus</taxon>
        <taxon>Mimivirus bradfordmassiliense</taxon>
    </lineage>
</organism>
<feature type="chain" id="PRO_0000244035" description="Uncharacterized protein R132">
    <location>
        <begin position="1"/>
        <end position="221"/>
    </location>
</feature>
<dbReference type="EMBL" id="AY653733">
    <property type="protein sequence ID" value="AAV50407.1"/>
    <property type="molecule type" value="Genomic_DNA"/>
</dbReference>
<dbReference type="SMR" id="Q5UPK3"/>
<dbReference type="KEGG" id="vg:9924732"/>
<dbReference type="Proteomes" id="UP000001134">
    <property type="component" value="Genome"/>
</dbReference>
<dbReference type="Gene3D" id="3.40.50.150">
    <property type="entry name" value="Vaccinia Virus protein VP39"/>
    <property type="match status" value="1"/>
</dbReference>
<dbReference type="InterPro" id="IPR029063">
    <property type="entry name" value="SAM-dependent_MTases_sf"/>
</dbReference>
<dbReference type="Pfam" id="PF13578">
    <property type="entry name" value="Methyltransf_24"/>
    <property type="match status" value="1"/>
</dbReference>
<dbReference type="SUPFAM" id="SSF53335">
    <property type="entry name" value="S-adenosyl-L-methionine-dependent methyltransferases"/>
    <property type="match status" value="1"/>
</dbReference>
<gene>
    <name type="ordered locus">MIMI_R132</name>
</gene>
<reference key="1">
    <citation type="journal article" date="2004" name="Science">
        <title>The 1.2-megabase genome sequence of Mimivirus.</title>
        <authorList>
            <person name="Raoult D."/>
            <person name="Audic S."/>
            <person name="Robert C."/>
            <person name="Abergel C."/>
            <person name="Renesto P."/>
            <person name="Ogata H."/>
            <person name="La Scola B."/>
            <person name="Susan M."/>
            <person name="Claverie J.-M."/>
        </authorList>
    </citation>
    <scope>NUCLEOTIDE SEQUENCE [LARGE SCALE GENOMIC DNA]</scope>
    <source>
        <strain>Rowbotham-Bradford</strain>
    </source>
</reference>
<proteinExistence type="predicted"/>
<sequence length="221" mass="25493">MDDESRLVAYQKAKYIKENMFGRTFHLHFHILENLANTFEKDDLTYVEIGTFEGGSLSLMMQNKKIKNLIGIDPLCIAGQEENLKKNTVKFNIHGSNVQHIKRYSYDEAIFPILDTLPNGIDILFIDGDHQYQPVINDFNLYYKYVNKGGYIVFDDYQDYRWSPQVMPAVNKIVADIQAGKYSPYKFEVIGCYPNNTGEVVSNIPVHGDMNNEFILKVVDK</sequence>
<name>YR132_MIMIV</name>
<protein>
    <recommendedName>
        <fullName>Uncharacterized protein R132</fullName>
    </recommendedName>
</protein>
<accession>Q5UPK3</accession>